<keyword id="KW-0030">Aminoacyl-tRNA synthetase</keyword>
<keyword id="KW-0067">ATP-binding</keyword>
<keyword id="KW-0963">Cytoplasm</keyword>
<keyword id="KW-0436">Ligase</keyword>
<keyword id="KW-0479">Metal-binding</keyword>
<keyword id="KW-0547">Nucleotide-binding</keyword>
<keyword id="KW-0648">Protein biosynthesis</keyword>
<keyword id="KW-1185">Reference proteome</keyword>
<keyword id="KW-0694">RNA-binding</keyword>
<keyword id="KW-0820">tRNA-binding</keyword>
<keyword id="KW-0862">Zinc</keyword>
<accession>Q3ITT7</accession>
<protein>
    <recommendedName>
        <fullName evidence="1">Alanine--tRNA ligase</fullName>
        <ecNumber evidence="1">6.1.1.7</ecNumber>
    </recommendedName>
    <alternativeName>
        <fullName evidence="1">Alanyl-tRNA synthetase</fullName>
        <shortName evidence="1">AlaRS</shortName>
    </alternativeName>
</protein>
<reference key="1">
    <citation type="journal article" date="2005" name="Genome Res.">
        <title>Living with two extremes: conclusions from the genome sequence of Natronomonas pharaonis.</title>
        <authorList>
            <person name="Falb M."/>
            <person name="Pfeiffer F."/>
            <person name="Palm P."/>
            <person name="Rodewald K."/>
            <person name="Hickmann V."/>
            <person name="Tittor J."/>
            <person name="Oesterhelt D."/>
        </authorList>
    </citation>
    <scope>NUCLEOTIDE SEQUENCE [LARGE SCALE GENOMIC DNA]</scope>
    <source>
        <strain>ATCC 35678 / DSM 2160 / CIP 103997 / JCM 8858 / NBRC 14720 / NCIMB 2260 / Gabara</strain>
    </source>
</reference>
<name>SYA_NATPD</name>
<gene>
    <name evidence="1" type="primary">alaS</name>
    <name type="ordered locus">NP_0710A</name>
</gene>
<evidence type="ECO:0000255" key="1">
    <source>
        <dbReference type="HAMAP-Rule" id="MF_00036"/>
    </source>
</evidence>
<evidence type="ECO:0000256" key="2">
    <source>
        <dbReference type="SAM" id="MobiDB-lite"/>
    </source>
</evidence>
<sequence>MSDLDEEYQLDYFHEEGFERKECPSCGAHFWTRDSERDICGEPPCADYDFIGDPGFDTEYSLEEMREAFLSFFEDHDHERIEPYPVAANRWRDDVLLTQASIYDFQPLVTSGETPPPANPLTISQPCIRMQDIDNVGKTGRHTMAFEMMAHHAFNAREDIDDPDQYAYEGEVYWKSETVAYCDQLLDELGADIEDVTYIEDPWVGGGNAGPAIEVIYRGLELATLVFMCMEQDPDGDYELKDGNRYSYMDTYVVDTGYGLERWTWMSQGTPTVYEAVYPEMISFLKDNAGLDYSDREESLVNRAARLSGKLDIDDVDDVEAARDDIADELGVETDELRALVEPLEDIYAIADHCRTLAYMLGDGIVPSNVGTGYLARMVLRRTKRLADGVGVDAPLDELVDMQAERLDYENRDTVRDIVRTEVEKYRETLERGRRHVERLAEEYAQKGDPIPLDEVIELYDSRGIQPETVEEIAADHGADVEIPDDFYSLVAERHGEADADADDGTLAGDDDRIADLPETEKLYYEEPERTDFEAVVLDVIERDADGETVYDVALDQTMFYPEGGGQPADTGTLSTDDVAAEVTDVQETNGVVLHRTDEAPGKGEFVRGQIDGVRRRRLMQHHTATHIVGHAARQVLGDHVRQAGAQKGVESARFDIRHYERISREEVKRIERVANNIVTDNLPVKQEWPKRNEAEADYGFDIYQGGIPPGETLRLIQVGEDVQACAGTHVLQTGDIGTIKILSTERVQDGVERLVFAAGDAAIEATQRTEDALYDTAEVLDVSPQEVPATAERFFEEWKDRGKRIEELKEQLAEARAHGGDGGEEVDLGGTTAVVQRVDGDMDDLRATANALVEDGTVAVLGSGDDSATFVVAVPDNVDINAGAVVGELADRVGGGGGGPPDFAQGGGPDVDSLDEALDAAPEILRSMLEA</sequence>
<organism>
    <name type="scientific">Natronomonas pharaonis (strain ATCC 35678 / DSM 2160 / CIP 103997 / JCM 8858 / NBRC 14720 / NCIMB 2260 / Gabara)</name>
    <name type="common">Halobacterium pharaonis</name>
    <dbReference type="NCBI Taxonomy" id="348780"/>
    <lineage>
        <taxon>Archaea</taxon>
        <taxon>Methanobacteriati</taxon>
        <taxon>Methanobacteriota</taxon>
        <taxon>Stenosarchaea group</taxon>
        <taxon>Halobacteria</taxon>
        <taxon>Halobacteriales</taxon>
        <taxon>Haloarculaceae</taxon>
        <taxon>Natronomonas</taxon>
    </lineage>
</organism>
<dbReference type="EC" id="6.1.1.7" evidence="1"/>
<dbReference type="EMBL" id="CR936257">
    <property type="protein sequence ID" value="CAI48446.1"/>
    <property type="molecule type" value="Genomic_DNA"/>
</dbReference>
<dbReference type="RefSeq" id="WP_011322082.1">
    <property type="nucleotide sequence ID" value="NC_007426.1"/>
</dbReference>
<dbReference type="SMR" id="Q3ITT7"/>
<dbReference type="STRING" id="348780.NP_0710A"/>
<dbReference type="EnsemblBacteria" id="CAI48446">
    <property type="protein sequence ID" value="CAI48446"/>
    <property type="gene ID" value="NP_0710A"/>
</dbReference>
<dbReference type="GeneID" id="3702499"/>
<dbReference type="KEGG" id="nph:NP_0710A"/>
<dbReference type="eggNOG" id="arCOG01255">
    <property type="taxonomic scope" value="Archaea"/>
</dbReference>
<dbReference type="HOGENOM" id="CLU_004485_4_0_2"/>
<dbReference type="OrthoDB" id="7506at2157"/>
<dbReference type="Proteomes" id="UP000002698">
    <property type="component" value="Chromosome"/>
</dbReference>
<dbReference type="GO" id="GO:0005737">
    <property type="term" value="C:cytoplasm"/>
    <property type="evidence" value="ECO:0007669"/>
    <property type="project" value="UniProtKB-SubCell"/>
</dbReference>
<dbReference type="GO" id="GO:0004813">
    <property type="term" value="F:alanine-tRNA ligase activity"/>
    <property type="evidence" value="ECO:0007669"/>
    <property type="project" value="UniProtKB-UniRule"/>
</dbReference>
<dbReference type="GO" id="GO:0002161">
    <property type="term" value="F:aminoacyl-tRNA deacylase activity"/>
    <property type="evidence" value="ECO:0007669"/>
    <property type="project" value="UniProtKB-ARBA"/>
</dbReference>
<dbReference type="GO" id="GO:0005524">
    <property type="term" value="F:ATP binding"/>
    <property type="evidence" value="ECO:0007669"/>
    <property type="project" value="UniProtKB-UniRule"/>
</dbReference>
<dbReference type="GO" id="GO:0000049">
    <property type="term" value="F:tRNA binding"/>
    <property type="evidence" value="ECO:0007669"/>
    <property type="project" value="UniProtKB-KW"/>
</dbReference>
<dbReference type="GO" id="GO:0008270">
    <property type="term" value="F:zinc ion binding"/>
    <property type="evidence" value="ECO:0007669"/>
    <property type="project" value="UniProtKB-UniRule"/>
</dbReference>
<dbReference type="GO" id="GO:0006419">
    <property type="term" value="P:alanyl-tRNA aminoacylation"/>
    <property type="evidence" value="ECO:0007669"/>
    <property type="project" value="UniProtKB-UniRule"/>
</dbReference>
<dbReference type="FunFam" id="3.10.310.40:FF:000001">
    <property type="entry name" value="Alanine--tRNA ligase"/>
    <property type="match status" value="1"/>
</dbReference>
<dbReference type="FunFam" id="3.30.930.10:FF:000056">
    <property type="entry name" value="Alanine--tRNA ligase"/>
    <property type="match status" value="1"/>
</dbReference>
<dbReference type="FunFam" id="3.30.980.10:FF:000004">
    <property type="entry name" value="Alanine--tRNA ligase, cytoplasmic"/>
    <property type="match status" value="1"/>
</dbReference>
<dbReference type="Gene3D" id="2.40.30.130">
    <property type="match status" value="1"/>
</dbReference>
<dbReference type="Gene3D" id="3.10.310.40">
    <property type="match status" value="1"/>
</dbReference>
<dbReference type="Gene3D" id="3.30.54.20">
    <property type="match status" value="1"/>
</dbReference>
<dbReference type="Gene3D" id="6.10.250.550">
    <property type="match status" value="1"/>
</dbReference>
<dbReference type="Gene3D" id="3.30.930.10">
    <property type="entry name" value="Bira Bifunctional Protein, Domain 2"/>
    <property type="match status" value="1"/>
</dbReference>
<dbReference type="Gene3D" id="3.30.980.10">
    <property type="entry name" value="Threonyl-trna Synthetase, Chain A, domain 2"/>
    <property type="match status" value="1"/>
</dbReference>
<dbReference type="HAMAP" id="MF_00036_A">
    <property type="entry name" value="Ala_tRNA_synth_A"/>
    <property type="match status" value="1"/>
</dbReference>
<dbReference type="InterPro" id="IPR045864">
    <property type="entry name" value="aa-tRNA-synth_II/BPL/LPL"/>
</dbReference>
<dbReference type="InterPro" id="IPR002318">
    <property type="entry name" value="Ala-tRNA-lgiase_IIc"/>
</dbReference>
<dbReference type="InterPro" id="IPR018162">
    <property type="entry name" value="Ala-tRNA-ligase_IIc_anticod-bd"/>
</dbReference>
<dbReference type="InterPro" id="IPR018165">
    <property type="entry name" value="Ala-tRNA-synth_IIc_core"/>
</dbReference>
<dbReference type="InterPro" id="IPR018164">
    <property type="entry name" value="Ala-tRNA-synth_IIc_N"/>
</dbReference>
<dbReference type="InterPro" id="IPR022429">
    <property type="entry name" value="Ala-tRNA_lgiase_arc"/>
</dbReference>
<dbReference type="InterPro" id="IPR050058">
    <property type="entry name" value="Ala-tRNA_ligase"/>
</dbReference>
<dbReference type="InterPro" id="IPR003156">
    <property type="entry name" value="DHHA1_dom"/>
</dbReference>
<dbReference type="InterPro" id="IPR018163">
    <property type="entry name" value="Thr/Ala-tRNA-synth_IIc_edit"/>
</dbReference>
<dbReference type="InterPro" id="IPR009000">
    <property type="entry name" value="Transl_B-barrel_sf"/>
</dbReference>
<dbReference type="InterPro" id="IPR012947">
    <property type="entry name" value="tRNA_SAD"/>
</dbReference>
<dbReference type="NCBIfam" id="TIGR03683">
    <property type="entry name" value="A-tRNA_syn_arch"/>
    <property type="match status" value="1"/>
</dbReference>
<dbReference type="NCBIfam" id="TIGR00344">
    <property type="entry name" value="alaS"/>
    <property type="match status" value="1"/>
</dbReference>
<dbReference type="PANTHER" id="PTHR11777:SF9">
    <property type="entry name" value="ALANINE--TRNA LIGASE, CYTOPLASMIC"/>
    <property type="match status" value="1"/>
</dbReference>
<dbReference type="PANTHER" id="PTHR11777">
    <property type="entry name" value="ALANYL-TRNA SYNTHETASE"/>
    <property type="match status" value="1"/>
</dbReference>
<dbReference type="Pfam" id="PF02272">
    <property type="entry name" value="DHHA1"/>
    <property type="match status" value="1"/>
</dbReference>
<dbReference type="Pfam" id="PF01411">
    <property type="entry name" value="tRNA-synt_2c"/>
    <property type="match status" value="1"/>
</dbReference>
<dbReference type="Pfam" id="PF07973">
    <property type="entry name" value="tRNA_SAD"/>
    <property type="match status" value="1"/>
</dbReference>
<dbReference type="PRINTS" id="PR00980">
    <property type="entry name" value="TRNASYNTHALA"/>
</dbReference>
<dbReference type="SMART" id="SM00863">
    <property type="entry name" value="tRNA_SAD"/>
    <property type="match status" value="1"/>
</dbReference>
<dbReference type="SUPFAM" id="SSF55681">
    <property type="entry name" value="Class II aaRS and biotin synthetases"/>
    <property type="match status" value="1"/>
</dbReference>
<dbReference type="SUPFAM" id="SSF101353">
    <property type="entry name" value="Putative anticodon-binding domain of alanyl-tRNA synthetase (AlaRS)"/>
    <property type="match status" value="1"/>
</dbReference>
<dbReference type="SUPFAM" id="SSF55186">
    <property type="entry name" value="ThrRS/AlaRS common domain"/>
    <property type="match status" value="1"/>
</dbReference>
<dbReference type="SUPFAM" id="SSF50447">
    <property type="entry name" value="Translation proteins"/>
    <property type="match status" value="1"/>
</dbReference>
<dbReference type="PROSITE" id="PS50860">
    <property type="entry name" value="AA_TRNA_LIGASE_II_ALA"/>
    <property type="match status" value="1"/>
</dbReference>
<proteinExistence type="inferred from homology"/>
<feature type="chain" id="PRO_0000075269" description="Alanine--tRNA ligase">
    <location>
        <begin position="1"/>
        <end position="932"/>
    </location>
</feature>
<feature type="region of interest" description="Disordered" evidence="2">
    <location>
        <begin position="893"/>
        <end position="916"/>
    </location>
</feature>
<feature type="compositionally biased region" description="Gly residues" evidence="2">
    <location>
        <begin position="894"/>
        <end position="910"/>
    </location>
</feature>
<feature type="binding site" evidence="1">
    <location>
        <position position="623"/>
    </location>
    <ligand>
        <name>Zn(2+)</name>
        <dbReference type="ChEBI" id="CHEBI:29105"/>
    </ligand>
</feature>
<feature type="binding site" evidence="1">
    <location>
        <position position="627"/>
    </location>
    <ligand>
        <name>Zn(2+)</name>
        <dbReference type="ChEBI" id="CHEBI:29105"/>
    </ligand>
</feature>
<feature type="binding site" evidence="1">
    <location>
        <position position="726"/>
    </location>
    <ligand>
        <name>Zn(2+)</name>
        <dbReference type="ChEBI" id="CHEBI:29105"/>
    </ligand>
</feature>
<feature type="binding site" evidence="1">
    <location>
        <position position="730"/>
    </location>
    <ligand>
        <name>Zn(2+)</name>
        <dbReference type="ChEBI" id="CHEBI:29105"/>
    </ligand>
</feature>
<comment type="function">
    <text evidence="1">Catalyzes the attachment of alanine to tRNA(Ala) in a two-step reaction: alanine is first activated by ATP to form Ala-AMP and then transferred to the acceptor end of tRNA(Ala). Also edits incorrectly charged Ser-tRNA(Ala) and Gly-tRNA(Ala) via its editing domain.</text>
</comment>
<comment type="catalytic activity">
    <reaction evidence="1">
        <text>tRNA(Ala) + L-alanine + ATP = L-alanyl-tRNA(Ala) + AMP + diphosphate</text>
        <dbReference type="Rhea" id="RHEA:12540"/>
        <dbReference type="Rhea" id="RHEA-COMP:9657"/>
        <dbReference type="Rhea" id="RHEA-COMP:9923"/>
        <dbReference type="ChEBI" id="CHEBI:30616"/>
        <dbReference type="ChEBI" id="CHEBI:33019"/>
        <dbReference type="ChEBI" id="CHEBI:57972"/>
        <dbReference type="ChEBI" id="CHEBI:78442"/>
        <dbReference type="ChEBI" id="CHEBI:78497"/>
        <dbReference type="ChEBI" id="CHEBI:456215"/>
        <dbReference type="EC" id="6.1.1.7"/>
    </reaction>
</comment>
<comment type="cofactor">
    <cofactor evidence="1">
        <name>Zn(2+)</name>
        <dbReference type="ChEBI" id="CHEBI:29105"/>
    </cofactor>
    <text evidence="1">Binds 1 zinc ion per subunit.</text>
</comment>
<comment type="subcellular location">
    <subcellularLocation>
        <location evidence="1">Cytoplasm</location>
    </subcellularLocation>
</comment>
<comment type="domain">
    <text evidence="1">Consists of three domains; the N-terminal catalytic domain, the editing domain and the C-terminal C-Ala domain. The editing domain removes incorrectly charged amino acids, while the C-Ala domain, along with tRNA(Ala), serves as a bridge to cooperatively bring together the editing and aminoacylation centers thus stimulating deacylation of misacylated tRNAs.</text>
</comment>
<comment type="similarity">
    <text evidence="1">Belongs to the class-II aminoacyl-tRNA synthetase family.</text>
</comment>